<reference key="1">
    <citation type="journal article" date="1993" name="EMBO J.">
        <title>Molecular genetic analysis of a locus required for resistance to antimicrobial peptides in Salmonella typhimurium.</title>
        <authorList>
            <person name="Parra-Lopez C."/>
            <person name="Baer M.T."/>
            <person name="Groisman E.A."/>
        </authorList>
    </citation>
    <scope>NUCLEOTIDE SEQUENCE [GENOMIC DNA]</scope>
    <scope>FUNCTION</scope>
    <scope>OPERON STRUCTURE</scope>
    <scope>DISRUPTION PHENOTYPE</scope>
    <source>
        <strain>ATCC 14028s / SGSG 2262</strain>
    </source>
</reference>
<reference key="2">
    <citation type="journal article" date="2001" name="Nature">
        <title>Complete genome sequence of Salmonella enterica serovar Typhimurium LT2.</title>
        <authorList>
            <person name="McClelland M."/>
            <person name="Sanderson K.E."/>
            <person name="Spieth J."/>
            <person name="Clifton S.W."/>
            <person name="Latreille P."/>
            <person name="Courtney L."/>
            <person name="Porwollik S."/>
            <person name="Ali J."/>
            <person name="Dante M."/>
            <person name="Du F."/>
            <person name="Hou S."/>
            <person name="Layman D."/>
            <person name="Leonard S."/>
            <person name="Nguyen C."/>
            <person name="Scott K."/>
            <person name="Holmes A."/>
            <person name="Grewal N."/>
            <person name="Mulvaney E."/>
            <person name="Ryan E."/>
            <person name="Sun H."/>
            <person name="Florea L."/>
            <person name="Miller W."/>
            <person name="Stoneking T."/>
            <person name="Nhan M."/>
            <person name="Waterston R."/>
            <person name="Wilson R.K."/>
        </authorList>
    </citation>
    <scope>NUCLEOTIDE SEQUENCE [LARGE SCALE GENOMIC DNA]</scope>
    <source>
        <strain>LT2 / SGSC1412 / ATCC 700720</strain>
    </source>
</reference>
<dbReference type="EMBL" id="X74212">
    <property type="protein sequence ID" value="CAA52288.1"/>
    <property type="molecule type" value="Genomic_DNA"/>
</dbReference>
<dbReference type="EMBL" id="AE006468">
    <property type="protein sequence ID" value="AAL20613.1"/>
    <property type="molecule type" value="Genomic_DNA"/>
</dbReference>
<dbReference type="PIR" id="S39589">
    <property type="entry name" value="S39589"/>
</dbReference>
<dbReference type="RefSeq" id="NP_460654.1">
    <property type="nucleotide sequence ID" value="NC_003197.2"/>
</dbReference>
<dbReference type="RefSeq" id="WP_000230462.1">
    <property type="nucleotide sequence ID" value="NC_003197.2"/>
</dbReference>
<dbReference type="SMR" id="P36638"/>
<dbReference type="STRING" id="99287.STM1696"/>
<dbReference type="TCDB" id="3.A.1.5.5">
    <property type="family name" value="the atp-binding cassette (abc) superfamily"/>
</dbReference>
<dbReference type="PaxDb" id="99287-STM1696"/>
<dbReference type="GeneID" id="1253214"/>
<dbReference type="KEGG" id="stm:STM1696"/>
<dbReference type="PATRIC" id="fig|99287.12.peg.1790"/>
<dbReference type="HOGENOM" id="CLU_000604_1_23_6"/>
<dbReference type="OMA" id="YIYVGQH"/>
<dbReference type="PhylomeDB" id="P36638"/>
<dbReference type="BioCyc" id="SENT99287:STM1696-MONOMER"/>
<dbReference type="Proteomes" id="UP000001014">
    <property type="component" value="Chromosome"/>
</dbReference>
<dbReference type="GO" id="GO:0005886">
    <property type="term" value="C:plasma membrane"/>
    <property type="evidence" value="ECO:0007669"/>
    <property type="project" value="UniProtKB-SubCell"/>
</dbReference>
<dbReference type="GO" id="GO:0005524">
    <property type="term" value="F:ATP binding"/>
    <property type="evidence" value="ECO:0007669"/>
    <property type="project" value="UniProtKB-KW"/>
</dbReference>
<dbReference type="GO" id="GO:0016887">
    <property type="term" value="F:ATP hydrolysis activity"/>
    <property type="evidence" value="ECO:0007669"/>
    <property type="project" value="InterPro"/>
</dbReference>
<dbReference type="GO" id="GO:0015833">
    <property type="term" value="P:peptide transport"/>
    <property type="evidence" value="ECO:0007669"/>
    <property type="project" value="UniProtKB-KW"/>
</dbReference>
<dbReference type="GO" id="GO:0015031">
    <property type="term" value="P:protein transport"/>
    <property type="evidence" value="ECO:0007669"/>
    <property type="project" value="UniProtKB-KW"/>
</dbReference>
<dbReference type="GO" id="GO:0055085">
    <property type="term" value="P:transmembrane transport"/>
    <property type="evidence" value="ECO:0007669"/>
    <property type="project" value="UniProtKB-ARBA"/>
</dbReference>
<dbReference type="CDD" id="cd03257">
    <property type="entry name" value="ABC_NikE_OppD_transporters"/>
    <property type="match status" value="1"/>
</dbReference>
<dbReference type="FunFam" id="3.40.50.300:FF:000301">
    <property type="entry name" value="Peptide transport system ATP-binding protein sapF"/>
    <property type="match status" value="1"/>
</dbReference>
<dbReference type="Gene3D" id="3.40.50.300">
    <property type="entry name" value="P-loop containing nucleotide triphosphate hydrolases"/>
    <property type="match status" value="1"/>
</dbReference>
<dbReference type="InterPro" id="IPR003593">
    <property type="entry name" value="AAA+_ATPase"/>
</dbReference>
<dbReference type="InterPro" id="IPR050319">
    <property type="entry name" value="ABC_transp_ATP-bind"/>
</dbReference>
<dbReference type="InterPro" id="IPR003439">
    <property type="entry name" value="ABC_transporter-like_ATP-bd"/>
</dbReference>
<dbReference type="InterPro" id="IPR017871">
    <property type="entry name" value="ABC_transporter-like_CS"/>
</dbReference>
<dbReference type="InterPro" id="IPR027417">
    <property type="entry name" value="P-loop_NTPase"/>
</dbReference>
<dbReference type="NCBIfam" id="NF011692">
    <property type="entry name" value="PRK15112.1"/>
    <property type="match status" value="1"/>
</dbReference>
<dbReference type="PANTHER" id="PTHR43776:SF4">
    <property type="entry name" value="PUTRESCINE EXPORT SYSTEM ATP-BINDING PROTEIN SAPF"/>
    <property type="match status" value="1"/>
</dbReference>
<dbReference type="PANTHER" id="PTHR43776">
    <property type="entry name" value="TRANSPORT ATP-BINDING PROTEIN"/>
    <property type="match status" value="1"/>
</dbReference>
<dbReference type="Pfam" id="PF00005">
    <property type="entry name" value="ABC_tran"/>
    <property type="match status" value="1"/>
</dbReference>
<dbReference type="SMART" id="SM00382">
    <property type="entry name" value="AAA"/>
    <property type="match status" value="1"/>
</dbReference>
<dbReference type="SUPFAM" id="SSF52540">
    <property type="entry name" value="P-loop containing nucleoside triphosphate hydrolases"/>
    <property type="match status" value="1"/>
</dbReference>
<dbReference type="PROSITE" id="PS00211">
    <property type="entry name" value="ABC_TRANSPORTER_1"/>
    <property type="match status" value="1"/>
</dbReference>
<dbReference type="PROSITE" id="PS50893">
    <property type="entry name" value="ABC_TRANSPORTER_2"/>
    <property type="match status" value="1"/>
</dbReference>
<sequence length="268" mass="30672">MVETLLEVRNLSKTFRYRTGWFRRQTVDAVKPLSFTLRERQTLAIIGENGSGKSTLAKMLAGMIEPTSGELLIDDHPLHYGDYSFRSQRIRMIFQDPSTSLNPRQRISQILDFPLRLNTDLEPEQRRKQIVETMRMVGLLPDHVSYYPHMLAPGQKQRLGLARALILRPKVIIADEALASLDMSMRSQLINLMLELQEKQGISYIYVTQHIGMMKHISDQVLVMHQGEVVERGSTADVLASPLHELTRRLIAGHFGEALTADAWRKDR</sequence>
<accession>P36638</accession>
<feature type="chain" id="PRO_0000092970" description="Peptide transport system ATP-binding protein SapF">
    <location>
        <begin position="1"/>
        <end position="268"/>
    </location>
</feature>
<feature type="domain" description="ABC transporter" evidence="1">
    <location>
        <begin position="6"/>
        <end position="251"/>
    </location>
</feature>
<feature type="binding site" evidence="1">
    <location>
        <begin position="47"/>
        <end position="54"/>
    </location>
    <ligand>
        <name>ATP</name>
        <dbReference type="ChEBI" id="CHEBI:30616"/>
    </ligand>
</feature>
<proteinExistence type="evidence at transcript level"/>
<keyword id="KW-0067">ATP-binding</keyword>
<keyword id="KW-0997">Cell inner membrane</keyword>
<keyword id="KW-1003">Cell membrane</keyword>
<keyword id="KW-0472">Membrane</keyword>
<keyword id="KW-0547">Nucleotide-binding</keyword>
<keyword id="KW-0571">Peptide transport</keyword>
<keyword id="KW-0653">Protein transport</keyword>
<keyword id="KW-1185">Reference proteome</keyword>
<keyword id="KW-0813">Transport</keyword>
<comment type="function">
    <text evidence="2">Involved in a peptide intake transport system that plays a role in the resistance to antimicrobial peptides.</text>
</comment>
<comment type="subcellular location">
    <subcellularLocation>
        <location evidence="4">Cell inner membrane</location>
        <topology evidence="4">Peripheral membrane protein</topology>
    </subcellularLocation>
</comment>
<comment type="induction">
    <text evidence="2">Part of the sapA-sapB-sapC-sapD-sapF operon, RNA detected in mid-log phase cells.</text>
</comment>
<comment type="disruption phenotype">
    <text evidence="2">Loss of resistance to protamine.</text>
</comment>
<comment type="similarity">
    <text evidence="4">Belongs to the ABC transporter superfamily.</text>
</comment>
<evidence type="ECO:0000255" key="1">
    <source>
        <dbReference type="PROSITE-ProRule" id="PRU00434"/>
    </source>
</evidence>
<evidence type="ECO:0000269" key="2">
    <source>
    </source>
</evidence>
<evidence type="ECO:0000303" key="3">
    <source>
    </source>
</evidence>
<evidence type="ECO:0000305" key="4"/>
<gene>
    <name evidence="3" type="primary">sapF</name>
    <name type="ordered locus">STM1696</name>
</gene>
<name>SAPF_SALTY</name>
<protein>
    <recommendedName>
        <fullName>Peptide transport system ATP-binding protein SapF</fullName>
    </recommendedName>
</protein>
<organism>
    <name type="scientific">Salmonella typhimurium (strain LT2 / SGSC1412 / ATCC 700720)</name>
    <dbReference type="NCBI Taxonomy" id="99287"/>
    <lineage>
        <taxon>Bacteria</taxon>
        <taxon>Pseudomonadati</taxon>
        <taxon>Pseudomonadota</taxon>
        <taxon>Gammaproteobacteria</taxon>
        <taxon>Enterobacterales</taxon>
        <taxon>Enterobacteriaceae</taxon>
        <taxon>Salmonella</taxon>
    </lineage>
</organism>